<sequence length="1134" mass="125012">MGLLASAGLLLLLVIGHPRSLGLKCGIRMVNMKSKEPAVGSRFFSRISSWRNSTVTGHPWQVSLKSDEHHFCGGSLIQEDRVVTAAHCLDSLSEKQLKNITVTSGEYSLFQKDKQEQNIPVSKIITHPEYNSREYMSPDIALLYLKHKVKFGNAVQPICLPDSDDKVEPGILCLSSGWGKISKTSEYSNVLQEMELPIMDDRACNTVLKSMNLPPLGRTMLCAGFPDWGMDACQGDSGGPLVCRRGGGIWILAGITSWVAGCAGGSVPVRNNHVKASLGIFSKVSELMDFITQNLFTGLDRGQPLSKVGSRYITKALSSVQEVNGSQRGKGILDMEKQVGCDHDYVSLRSSSGVLFNQRSLMEDDGKQNKRVCGKILPSPLLAETSEAMVPFVSDTEDSGSGFELTVTAVQKSEAGSGCGSLAILVEEGTNHSAKYPDLYPSNTRCHWFICAPEKHIIKLTFEDFAVKFSPNCIYDAVVIYGDSEEKHKLAKLCGMLTITSIFSSSNMTVIYFKSDGKNRLQGFKARFTILPSESLNKFEPKLPPQNNPVSTVKAILHDVCGIPPFSPQWLSRRIAGGEEACPHCWPWQVGLRFLGDYQCGGAIINPVWILTAAHCVQLKNNPLSWTIIAGDHDRNLKESTEQVRRAKHIIVHEDFNTLSYDSDIALIQLSSPLEYNSVVRPVCLPHSAEPLFSSEICAVTGWGSISADGGLASRLQQIQVHVLEREVCEHTYYSAHPGGITEKMICAGFAASGEKDFCQGDSGGPLVCRHENGPFVLYGIVSWGAGCVQPWKPGVFARVMIFLDWIQSKINGPASLQTNNKCKTLKQQLPPPTPSPDSASWPGCCSEAELEKPRGFFPTPRYLLDYRGRLECSWVLRVSASSMAKFTIEYLSLLGSPVCQDSVLIIYEERHSKRKTAGGLHGRRLYSMTFMSPGPLVRVTFHALVRGAFGISYIVLKVLGPKDSKITRLSQSSNREHLVPCEDVLLTKPEGIMQIPRNSHRTTMGCQWRLVAPLNHIIQLNIINFPMKPTTFVCHGHLRVYEGFGPGKKLIASFAGTLAMILTKDILKREKLNFINTYIMHIWENSVYDNVRSVGKRKQKKFASNLSYSMEAEKSRIQVPADLVPAKGSLSGS</sequence>
<protein>
    <recommendedName>
        <fullName>Ovochymase-1</fullName>
        <ecNumber>3.4.21.-</ecNumber>
    </recommendedName>
</protein>
<dbReference type="EC" id="3.4.21.-"/>
<dbReference type="EMBL" id="AC012151">
    <property type="status" value="NOT_ANNOTATED_CDS"/>
    <property type="molecule type" value="Genomic_DNA"/>
</dbReference>
<dbReference type="EMBL" id="BN000128">
    <property type="protein sequence ID" value="CAD67579.1"/>
    <property type="molecule type" value="mRNA"/>
</dbReference>
<dbReference type="CCDS" id="CCDS91669.1">
    <molecule id="Q7RTY7-2"/>
</dbReference>
<dbReference type="RefSeq" id="NP_001340108.1">
    <molecule id="Q7RTY7-2"/>
    <property type="nucleotide sequence ID" value="NM_001353179.2"/>
</dbReference>
<dbReference type="RefSeq" id="NP_899234.2">
    <property type="nucleotide sequence ID" value="NM_183378.2"/>
</dbReference>
<dbReference type="RefSeq" id="XP_011518941.1">
    <property type="nucleotide sequence ID" value="XM_011520639.2"/>
</dbReference>
<dbReference type="SMR" id="Q7RTY7"/>
<dbReference type="BioGRID" id="131129">
    <property type="interactions" value="4"/>
</dbReference>
<dbReference type="IntAct" id="Q7RTY7">
    <property type="interactions" value="3"/>
</dbReference>
<dbReference type="STRING" id="9606.ENSP00000326708"/>
<dbReference type="MEROPS" id="S01.078"/>
<dbReference type="MEROPS" id="S01.322"/>
<dbReference type="GlyConnect" id="2011">
    <property type="glycosylation" value="1 O-Linked glycan (1 site)"/>
</dbReference>
<dbReference type="GlyCosmos" id="Q7RTY7">
    <property type="glycosylation" value="7 sites, 1 glycan"/>
</dbReference>
<dbReference type="GlyGen" id="Q7RTY7">
    <property type="glycosylation" value="9 sites, 2 O-linked glycans (2 sites)"/>
</dbReference>
<dbReference type="iPTMnet" id="Q7RTY7"/>
<dbReference type="PhosphoSitePlus" id="Q7RTY7"/>
<dbReference type="BioMuta" id="OVCH1"/>
<dbReference type="DMDM" id="118573093"/>
<dbReference type="MassIVE" id="Q7RTY7"/>
<dbReference type="PaxDb" id="9606-ENSP00000326708"/>
<dbReference type="PeptideAtlas" id="Q7RTY7"/>
<dbReference type="Antibodypedia" id="48487">
    <property type="antibodies" value="57 antibodies from 11 providers"/>
</dbReference>
<dbReference type="DNASU" id="341350"/>
<dbReference type="Ensembl" id="ENST00000318184.9">
    <molecule id="Q7RTY7-1"/>
    <property type="protein sequence ID" value="ENSP00000326708.5"/>
    <property type="gene ID" value="ENSG00000187950.9"/>
</dbReference>
<dbReference type="Ensembl" id="ENST00000537054.2">
    <molecule id="Q7RTY7-2"/>
    <property type="protein sequence ID" value="ENSP00000445480.2"/>
    <property type="gene ID" value="ENSG00000187950.9"/>
</dbReference>
<dbReference type="MANE-Select" id="ENST00000537054.2">
    <molecule id="Q7RTY7-2"/>
    <property type="protein sequence ID" value="ENSP00000445480.2"/>
    <property type="RefSeq nucleotide sequence ID" value="NM_001353179.2"/>
    <property type="RefSeq protein sequence ID" value="NP_001340108.1"/>
</dbReference>
<dbReference type="UCSC" id="uc001rix.2">
    <molecule id="Q7RTY7-1"/>
    <property type="organism name" value="human"/>
</dbReference>
<dbReference type="AGR" id="HGNC:23080"/>
<dbReference type="GeneCards" id="OVCH1"/>
<dbReference type="HGNC" id="HGNC:23080">
    <property type="gene designation" value="OVCH1"/>
</dbReference>
<dbReference type="HPA" id="ENSG00000187950">
    <property type="expression patterns" value="Tissue enhanced (lung, testis)"/>
</dbReference>
<dbReference type="MIM" id="621069">
    <property type="type" value="gene"/>
</dbReference>
<dbReference type="neXtProt" id="NX_Q7RTY7"/>
<dbReference type="OpenTargets" id="ENSG00000187950"/>
<dbReference type="PharmGKB" id="PA134910581"/>
<dbReference type="VEuPathDB" id="HostDB:ENSG00000187950"/>
<dbReference type="eggNOG" id="KOG3627">
    <property type="taxonomic scope" value="Eukaryota"/>
</dbReference>
<dbReference type="GeneTree" id="ENSGT00940000163017"/>
<dbReference type="HOGENOM" id="CLU_004497_0_0_1"/>
<dbReference type="InParanoid" id="Q7RTY7"/>
<dbReference type="OMA" id="EHTYYSA"/>
<dbReference type="OrthoDB" id="6380398at2759"/>
<dbReference type="PAN-GO" id="Q7RTY7">
    <property type="GO annotations" value="1 GO annotation based on evolutionary models"/>
</dbReference>
<dbReference type="PhylomeDB" id="Q7RTY7"/>
<dbReference type="TreeFam" id="TF318987"/>
<dbReference type="PathwayCommons" id="Q7RTY7"/>
<dbReference type="SignaLink" id="Q7RTY7"/>
<dbReference type="BioGRID-ORCS" id="341350">
    <property type="hits" value="9 hits in 381 CRISPR screens"/>
</dbReference>
<dbReference type="GenomeRNAi" id="341350"/>
<dbReference type="Pharos" id="Q7RTY7">
    <property type="development level" value="Tdark"/>
</dbReference>
<dbReference type="PRO" id="PR:Q7RTY7"/>
<dbReference type="Proteomes" id="UP000005640">
    <property type="component" value="Chromosome 12"/>
</dbReference>
<dbReference type="RNAct" id="Q7RTY7">
    <property type="molecule type" value="protein"/>
</dbReference>
<dbReference type="Bgee" id="ENSG00000187950">
    <property type="expression patterns" value="Expressed in male germ line stem cell (sensu Vertebrata) in testis and 91 other cell types or tissues"/>
</dbReference>
<dbReference type="ExpressionAtlas" id="Q7RTY7">
    <property type="expression patterns" value="baseline and differential"/>
</dbReference>
<dbReference type="GO" id="GO:0005576">
    <property type="term" value="C:extracellular region"/>
    <property type="evidence" value="ECO:0007669"/>
    <property type="project" value="UniProtKB-SubCell"/>
</dbReference>
<dbReference type="GO" id="GO:0046872">
    <property type="term" value="F:metal ion binding"/>
    <property type="evidence" value="ECO:0007669"/>
    <property type="project" value="UniProtKB-KW"/>
</dbReference>
<dbReference type="GO" id="GO:0004252">
    <property type="term" value="F:serine-type endopeptidase activity"/>
    <property type="evidence" value="ECO:0007669"/>
    <property type="project" value="InterPro"/>
</dbReference>
<dbReference type="GO" id="GO:0006508">
    <property type="term" value="P:proteolysis"/>
    <property type="evidence" value="ECO:0007669"/>
    <property type="project" value="UniProtKB-KW"/>
</dbReference>
<dbReference type="CDD" id="cd00041">
    <property type="entry name" value="CUB"/>
    <property type="match status" value="3"/>
</dbReference>
<dbReference type="CDD" id="cd00190">
    <property type="entry name" value="Tryp_SPc"/>
    <property type="match status" value="2"/>
</dbReference>
<dbReference type="FunFam" id="2.60.120.290:FF:000005">
    <property type="entry name" value="Procollagen C-endopeptidase enhancer 1"/>
    <property type="match status" value="1"/>
</dbReference>
<dbReference type="FunFam" id="2.40.10.10:FF:000003">
    <property type="entry name" value="Transmembrane serine protease 3"/>
    <property type="match status" value="2"/>
</dbReference>
<dbReference type="Gene3D" id="2.60.120.290">
    <property type="entry name" value="Spermadhesin, CUB domain"/>
    <property type="match status" value="3"/>
</dbReference>
<dbReference type="Gene3D" id="2.40.10.10">
    <property type="entry name" value="Trypsin-like serine proteases"/>
    <property type="match status" value="2"/>
</dbReference>
<dbReference type="InterPro" id="IPR000859">
    <property type="entry name" value="CUB_dom"/>
</dbReference>
<dbReference type="InterPro" id="IPR009003">
    <property type="entry name" value="Peptidase_S1_PA"/>
</dbReference>
<dbReference type="InterPro" id="IPR043504">
    <property type="entry name" value="Peptidase_S1_PA_chymotrypsin"/>
</dbReference>
<dbReference type="InterPro" id="IPR001314">
    <property type="entry name" value="Peptidase_S1A"/>
</dbReference>
<dbReference type="InterPro" id="IPR035914">
    <property type="entry name" value="Sperma_CUB_dom_sf"/>
</dbReference>
<dbReference type="InterPro" id="IPR001254">
    <property type="entry name" value="Trypsin_dom"/>
</dbReference>
<dbReference type="InterPro" id="IPR018114">
    <property type="entry name" value="TRYPSIN_HIS"/>
</dbReference>
<dbReference type="InterPro" id="IPR033116">
    <property type="entry name" value="TRYPSIN_SER"/>
</dbReference>
<dbReference type="PANTHER" id="PTHR24252">
    <property type="entry name" value="ACROSIN-RELATED"/>
    <property type="match status" value="1"/>
</dbReference>
<dbReference type="PANTHER" id="PTHR24252:SF18">
    <property type="entry name" value="OVOCHYMASE 1"/>
    <property type="match status" value="1"/>
</dbReference>
<dbReference type="Pfam" id="PF00431">
    <property type="entry name" value="CUB"/>
    <property type="match status" value="2"/>
</dbReference>
<dbReference type="Pfam" id="PF00089">
    <property type="entry name" value="Trypsin"/>
    <property type="match status" value="2"/>
</dbReference>
<dbReference type="PRINTS" id="PR00722">
    <property type="entry name" value="CHYMOTRYPSIN"/>
</dbReference>
<dbReference type="SMART" id="SM00042">
    <property type="entry name" value="CUB"/>
    <property type="match status" value="2"/>
</dbReference>
<dbReference type="SMART" id="SM00020">
    <property type="entry name" value="Tryp_SPc"/>
    <property type="match status" value="2"/>
</dbReference>
<dbReference type="SUPFAM" id="SSF49854">
    <property type="entry name" value="Spermadhesin, CUB domain"/>
    <property type="match status" value="4"/>
</dbReference>
<dbReference type="SUPFAM" id="SSF50494">
    <property type="entry name" value="Trypsin-like serine proteases"/>
    <property type="match status" value="2"/>
</dbReference>
<dbReference type="PROSITE" id="PS01180">
    <property type="entry name" value="CUB"/>
    <property type="match status" value="3"/>
</dbReference>
<dbReference type="PROSITE" id="PS50240">
    <property type="entry name" value="TRYPSIN_DOM"/>
    <property type="match status" value="2"/>
</dbReference>
<dbReference type="PROSITE" id="PS00134">
    <property type="entry name" value="TRYPSIN_HIS"/>
    <property type="match status" value="2"/>
</dbReference>
<dbReference type="PROSITE" id="PS00135">
    <property type="entry name" value="TRYPSIN_SER"/>
    <property type="match status" value="1"/>
</dbReference>
<proteinExistence type="evidence at protein level"/>
<comment type="subcellular location">
    <subcellularLocation>
        <location evidence="1">Secreted</location>
    </subcellularLocation>
</comment>
<comment type="alternative products">
    <event type="alternative splicing"/>
    <isoform>
        <id>Q7RTY7-1</id>
        <name>1</name>
        <sequence type="displayed"/>
    </isoform>
    <isoform>
        <id>Q7RTY7-2</id>
        <name>2</name>
        <sequence type="described" ref="VSP_062203 VSP_062204 VSP_062205 VSP_062206"/>
    </isoform>
</comment>
<comment type="similarity">
    <text evidence="4">Belongs to the peptidase S1 family.</text>
</comment>
<feature type="signal peptide" evidence="2">
    <location>
        <begin position="1"/>
        <end position="22"/>
    </location>
</feature>
<feature type="propeptide" id="PRO_0000261179" description="Activation peptide" evidence="1">
    <location>
        <begin position="23"/>
        <end position="46"/>
    </location>
</feature>
<feature type="chain" id="PRO_0000261180" description="Ovochymase-1">
    <location>
        <begin position="47"/>
        <end position="1134"/>
    </location>
</feature>
<feature type="domain" description="Peptidase S1 1" evidence="4">
    <location>
        <begin position="38"/>
        <end position="296"/>
    </location>
</feature>
<feature type="domain" description="CUB 1" evidence="3">
    <location>
        <begin position="284"/>
        <end position="410"/>
    </location>
</feature>
<feature type="domain" description="CUB 2" evidence="3">
    <location>
        <begin position="419"/>
        <end position="531"/>
    </location>
</feature>
<feature type="domain" description="Peptidase S1 2" evidence="4">
    <location>
        <begin position="575"/>
        <end position="812"/>
    </location>
</feature>
<feature type="domain" description="CUB 3" evidence="3">
    <location>
        <begin position="846"/>
        <end position="957"/>
    </location>
</feature>
<feature type="active site" description="Charge relay system" evidence="1">
    <location>
        <position position="87"/>
    </location>
</feature>
<feature type="active site" description="Charge relay system" evidence="1">
    <location>
        <position position="139"/>
    </location>
</feature>
<feature type="active site" description="Charge relay system" evidence="1">
    <location>
        <position position="237"/>
    </location>
</feature>
<feature type="active site" description="Charge relay system" evidence="1">
    <location>
        <position position="615"/>
    </location>
</feature>
<feature type="active site" description="Charge relay system" evidence="1">
    <location>
        <position position="664"/>
    </location>
</feature>
<feature type="active site" description="Charge relay system" evidence="1">
    <location>
        <position position="763"/>
    </location>
</feature>
<feature type="binding site" evidence="1">
    <location>
        <position position="116"/>
    </location>
    <ligand>
        <name>Ca(2+)</name>
        <dbReference type="ChEBI" id="CHEBI:29108"/>
    </ligand>
</feature>
<feature type="glycosylation site" description="N-linked (GlcNAc...) asparagine" evidence="2">
    <location>
        <position position="52"/>
    </location>
</feature>
<feature type="glycosylation site" description="N-linked (GlcNAc...) asparagine" evidence="2">
    <location>
        <position position="99"/>
    </location>
</feature>
<feature type="glycosylation site" description="N-linked (GlcNAc...) asparagine" evidence="2">
    <location>
        <position position="324"/>
    </location>
</feature>
<feature type="glycosylation site" description="N-linked (GlcNAc...) asparagine" evidence="2">
    <location>
        <position position="431"/>
    </location>
</feature>
<feature type="glycosylation site" description="N-linked (GlcNAc...) asparagine" evidence="2">
    <location>
        <position position="507"/>
    </location>
</feature>
<feature type="glycosylation site" description="N-linked (GlcNAc...) asparagine" evidence="2">
    <location>
        <position position="1106"/>
    </location>
</feature>
<feature type="disulfide bond" evidence="1">
    <location>
        <begin position="72"/>
        <end position="88"/>
    </location>
</feature>
<feature type="disulfide bond" evidence="1">
    <location>
        <begin position="173"/>
        <end position="243"/>
    </location>
</feature>
<feature type="disulfide bond" evidence="1">
    <location>
        <begin position="204"/>
        <end position="222"/>
    </location>
</feature>
<feature type="disulfide bond" evidence="1">
    <location>
        <begin position="233"/>
        <end position="262"/>
    </location>
</feature>
<feature type="disulfide bond" evidence="1">
    <location>
        <begin position="341"/>
        <end position="373"/>
    </location>
</feature>
<feature type="disulfide bond" evidence="1">
    <location>
        <begin position="419"/>
        <end position="446"/>
    </location>
</feature>
<feature type="disulfide bond" evidence="1">
    <location>
        <begin position="473"/>
        <end position="494"/>
    </location>
</feature>
<feature type="disulfide bond" evidence="1">
    <location>
        <begin position="600"/>
        <end position="616"/>
    </location>
</feature>
<feature type="disulfide bond" evidence="1">
    <location>
        <begin position="698"/>
        <end position="769"/>
    </location>
</feature>
<feature type="disulfide bond" evidence="1">
    <location>
        <begin position="729"/>
        <end position="747"/>
    </location>
</feature>
<feature type="disulfide bond" evidence="1">
    <location>
        <begin position="759"/>
        <end position="788"/>
    </location>
</feature>
<feature type="disulfide bond" evidence="1">
    <location>
        <begin position="846"/>
        <end position="873"/>
    </location>
</feature>
<feature type="splice variant" id="VSP_062203" description="In isoform 2.">
    <original>GI</original>
    <variation>DCKPQGTVLFGESGKICYPHSKGDYYSHNCLYVWKIMVPEDKIILIKFTS</variation>
    <location>
        <begin position="331"/>
        <end position="332"/>
    </location>
</feature>
<feature type="splice variant" id="VSP_062204" description="In isoform 2.">
    <original>NQRSLMEDDGKQNKR</original>
    <variation>SK</variation>
    <location>
        <begin position="357"/>
        <end position="371"/>
    </location>
</feature>
<feature type="splice variant" id="VSP_062205" description="In isoform 2.">
    <original>ASF</original>
    <variation>GEC</variation>
    <location>
        <begin position="1053"/>
        <end position="1055"/>
    </location>
</feature>
<feature type="splice variant" id="VSP_062206" description="In isoform 2.">
    <location>
        <begin position="1056"/>
        <end position="1134"/>
    </location>
</feature>
<feature type="sequence variant" id="VAR_029089" description="In dbSNP:rs10843438.">
    <original>R</original>
    <variation>C</variation>
    <location>
        <position position="133"/>
    </location>
</feature>
<feature type="sequence variant" id="VAR_029090" description="In dbSNP:rs967181.">
    <original>W</original>
    <variation>G</variation>
    <location>
        <position position="228"/>
    </location>
</feature>
<feature type="sequence variant" id="VAR_029091" description="In dbSNP:rs3847680.">
    <original>K</original>
    <variation>E</variation>
    <location>
        <position position="330"/>
    </location>
</feature>
<feature type="sequence variant" id="VAR_029092" description="In dbSNP:rs7975356.">
    <original>T</original>
    <variation>I</variation>
    <location>
        <position position="444"/>
    </location>
</feature>
<feature type="sequence variant" id="VAR_057159" description="In dbSNP:rs35183403.">
    <original>L</original>
    <variation>V</variation>
    <location>
        <position position="557"/>
    </location>
</feature>
<feature type="sequence variant" id="VAR_029093" description="In dbSNP:rs11050243.">
    <original>S</original>
    <variation>F</variation>
    <location>
        <position position="672"/>
    </location>
</feature>
<feature type="sequence variant" id="VAR_029094" description="In dbSNP:rs12305672.">
    <original>G</original>
    <variation>R</variation>
    <location>
        <position position="754"/>
    </location>
</feature>
<feature type="sequence variant" id="VAR_029095" description="In dbSNP:rs1347570.">
    <original>A</original>
    <variation>P</variation>
    <location>
        <position position="881"/>
    </location>
</feature>
<feature type="sequence variant" id="VAR_029096" description="In dbSNP:rs7967676.">
    <original>P</original>
    <variation>S</variation>
    <location>
        <position position="934"/>
    </location>
</feature>
<accession>Q7RTY7</accession>
<accession>H0YH00</accession>
<organism>
    <name type="scientific">Homo sapiens</name>
    <name type="common">Human</name>
    <dbReference type="NCBI Taxonomy" id="9606"/>
    <lineage>
        <taxon>Eukaryota</taxon>
        <taxon>Metazoa</taxon>
        <taxon>Chordata</taxon>
        <taxon>Craniata</taxon>
        <taxon>Vertebrata</taxon>
        <taxon>Euteleostomi</taxon>
        <taxon>Mammalia</taxon>
        <taxon>Eutheria</taxon>
        <taxon>Euarchontoglires</taxon>
        <taxon>Primates</taxon>
        <taxon>Haplorrhini</taxon>
        <taxon>Catarrhini</taxon>
        <taxon>Hominidae</taxon>
        <taxon>Homo</taxon>
    </lineage>
</organism>
<gene>
    <name type="primary">OVCH1</name>
</gene>
<evidence type="ECO:0000250" key="1"/>
<evidence type="ECO:0000255" key="2"/>
<evidence type="ECO:0000255" key="3">
    <source>
        <dbReference type="PROSITE-ProRule" id="PRU00059"/>
    </source>
</evidence>
<evidence type="ECO:0000255" key="4">
    <source>
        <dbReference type="PROSITE-ProRule" id="PRU00274"/>
    </source>
</evidence>
<keyword id="KW-0025">Alternative splicing</keyword>
<keyword id="KW-0106">Calcium</keyword>
<keyword id="KW-1015">Disulfide bond</keyword>
<keyword id="KW-0325">Glycoprotein</keyword>
<keyword id="KW-0378">Hydrolase</keyword>
<keyword id="KW-0479">Metal-binding</keyword>
<keyword id="KW-0645">Protease</keyword>
<keyword id="KW-1267">Proteomics identification</keyword>
<keyword id="KW-1185">Reference proteome</keyword>
<keyword id="KW-0677">Repeat</keyword>
<keyword id="KW-0964">Secreted</keyword>
<keyword id="KW-0720">Serine protease</keyword>
<keyword id="KW-0732">Signal</keyword>
<keyword id="KW-0865">Zymogen</keyword>
<reference key="1">
    <citation type="journal article" date="2006" name="Nature">
        <title>The finished DNA sequence of human chromosome 12.</title>
        <authorList>
            <person name="Scherer S.E."/>
            <person name="Muzny D.M."/>
            <person name="Buhay C.J."/>
            <person name="Chen R."/>
            <person name="Cree A."/>
            <person name="Ding Y."/>
            <person name="Dugan-Rocha S."/>
            <person name="Gill R."/>
            <person name="Gunaratne P."/>
            <person name="Harris R.A."/>
            <person name="Hawes A.C."/>
            <person name="Hernandez J."/>
            <person name="Hodgson A.V."/>
            <person name="Hume J."/>
            <person name="Jackson A."/>
            <person name="Khan Z.M."/>
            <person name="Kovar-Smith C."/>
            <person name="Lewis L.R."/>
            <person name="Lozado R.J."/>
            <person name="Metzker M.L."/>
            <person name="Milosavljevic A."/>
            <person name="Miner G.R."/>
            <person name="Montgomery K.T."/>
            <person name="Morgan M.B."/>
            <person name="Nazareth L.V."/>
            <person name="Scott G."/>
            <person name="Sodergren E."/>
            <person name="Song X.-Z."/>
            <person name="Steffen D."/>
            <person name="Lovering R.C."/>
            <person name="Wheeler D.A."/>
            <person name="Worley K.C."/>
            <person name="Yuan Y."/>
            <person name="Zhang Z."/>
            <person name="Adams C.Q."/>
            <person name="Ansari-Lari M.A."/>
            <person name="Ayele M."/>
            <person name="Brown M.J."/>
            <person name="Chen G."/>
            <person name="Chen Z."/>
            <person name="Clerc-Blankenburg K.P."/>
            <person name="Davis C."/>
            <person name="Delgado O."/>
            <person name="Dinh H.H."/>
            <person name="Draper H."/>
            <person name="Gonzalez-Garay M.L."/>
            <person name="Havlak P."/>
            <person name="Jackson L.R."/>
            <person name="Jacob L.S."/>
            <person name="Kelly S.H."/>
            <person name="Li L."/>
            <person name="Li Z."/>
            <person name="Liu J."/>
            <person name="Liu W."/>
            <person name="Lu J."/>
            <person name="Maheshwari M."/>
            <person name="Nguyen B.-V."/>
            <person name="Okwuonu G.O."/>
            <person name="Pasternak S."/>
            <person name="Perez L.M."/>
            <person name="Plopper F.J.H."/>
            <person name="Santibanez J."/>
            <person name="Shen H."/>
            <person name="Tabor P.E."/>
            <person name="Verduzco D."/>
            <person name="Waldron L."/>
            <person name="Wang Q."/>
            <person name="Williams G.A."/>
            <person name="Zhang J."/>
            <person name="Zhou J."/>
            <person name="Allen C.C."/>
            <person name="Amin A.G."/>
            <person name="Anyalebechi V."/>
            <person name="Bailey M."/>
            <person name="Barbaria J.A."/>
            <person name="Bimage K.E."/>
            <person name="Bryant N.P."/>
            <person name="Burch P.E."/>
            <person name="Burkett C.E."/>
            <person name="Burrell K.L."/>
            <person name="Calderon E."/>
            <person name="Cardenas V."/>
            <person name="Carter K."/>
            <person name="Casias K."/>
            <person name="Cavazos I."/>
            <person name="Cavazos S.R."/>
            <person name="Ceasar H."/>
            <person name="Chacko J."/>
            <person name="Chan S.N."/>
            <person name="Chavez D."/>
            <person name="Christopoulos C."/>
            <person name="Chu J."/>
            <person name="Cockrell R."/>
            <person name="Cox C.D."/>
            <person name="Dang M."/>
            <person name="Dathorne S.R."/>
            <person name="David R."/>
            <person name="Davis C.M."/>
            <person name="Davy-Carroll L."/>
            <person name="Deshazo D.R."/>
            <person name="Donlin J.E."/>
            <person name="D'Souza L."/>
            <person name="Eaves K.A."/>
            <person name="Egan A."/>
            <person name="Emery-Cohen A.J."/>
            <person name="Escotto M."/>
            <person name="Flagg N."/>
            <person name="Forbes L.D."/>
            <person name="Gabisi A.M."/>
            <person name="Garza M."/>
            <person name="Hamilton C."/>
            <person name="Henderson N."/>
            <person name="Hernandez O."/>
            <person name="Hines S."/>
            <person name="Hogues M.E."/>
            <person name="Huang M."/>
            <person name="Idlebird D.G."/>
            <person name="Johnson R."/>
            <person name="Jolivet A."/>
            <person name="Jones S."/>
            <person name="Kagan R."/>
            <person name="King L.M."/>
            <person name="Leal B."/>
            <person name="Lebow H."/>
            <person name="Lee S."/>
            <person name="LeVan J.M."/>
            <person name="Lewis L.C."/>
            <person name="London P."/>
            <person name="Lorensuhewa L.M."/>
            <person name="Loulseged H."/>
            <person name="Lovett D.A."/>
            <person name="Lucier A."/>
            <person name="Lucier R.L."/>
            <person name="Ma J."/>
            <person name="Madu R.C."/>
            <person name="Mapua P."/>
            <person name="Martindale A.D."/>
            <person name="Martinez E."/>
            <person name="Massey E."/>
            <person name="Mawhiney S."/>
            <person name="Meador M.G."/>
            <person name="Mendez S."/>
            <person name="Mercado C."/>
            <person name="Mercado I.C."/>
            <person name="Merritt C.E."/>
            <person name="Miner Z.L."/>
            <person name="Minja E."/>
            <person name="Mitchell T."/>
            <person name="Mohabbat F."/>
            <person name="Mohabbat K."/>
            <person name="Montgomery B."/>
            <person name="Moore N."/>
            <person name="Morris S."/>
            <person name="Munidasa M."/>
            <person name="Ngo R.N."/>
            <person name="Nguyen N.B."/>
            <person name="Nickerson E."/>
            <person name="Nwaokelemeh O.O."/>
            <person name="Nwokenkwo S."/>
            <person name="Obregon M."/>
            <person name="Oguh M."/>
            <person name="Oragunye N."/>
            <person name="Oviedo R.J."/>
            <person name="Parish B.J."/>
            <person name="Parker D.N."/>
            <person name="Parrish J."/>
            <person name="Parks K.L."/>
            <person name="Paul H.A."/>
            <person name="Payton B.A."/>
            <person name="Perez A."/>
            <person name="Perrin W."/>
            <person name="Pickens A."/>
            <person name="Primus E.L."/>
            <person name="Pu L.-L."/>
            <person name="Puazo M."/>
            <person name="Quiles M.M."/>
            <person name="Quiroz J.B."/>
            <person name="Rabata D."/>
            <person name="Reeves K."/>
            <person name="Ruiz S.J."/>
            <person name="Shao H."/>
            <person name="Sisson I."/>
            <person name="Sonaike T."/>
            <person name="Sorelle R.P."/>
            <person name="Sutton A.E."/>
            <person name="Svatek A.F."/>
            <person name="Svetz L.A."/>
            <person name="Tamerisa K.S."/>
            <person name="Taylor T.R."/>
            <person name="Teague B."/>
            <person name="Thomas N."/>
            <person name="Thorn R.D."/>
            <person name="Trejos Z.Y."/>
            <person name="Trevino B.K."/>
            <person name="Ukegbu O.N."/>
            <person name="Urban J.B."/>
            <person name="Vasquez L.I."/>
            <person name="Vera V.A."/>
            <person name="Villasana D.M."/>
            <person name="Wang L."/>
            <person name="Ward-Moore S."/>
            <person name="Warren J.T."/>
            <person name="Wei X."/>
            <person name="White F."/>
            <person name="Williamson A.L."/>
            <person name="Wleczyk R."/>
            <person name="Wooden H.S."/>
            <person name="Wooden S.H."/>
            <person name="Yen J."/>
            <person name="Yoon L."/>
            <person name="Yoon V."/>
            <person name="Zorrilla S.E."/>
            <person name="Nelson D."/>
            <person name="Kucherlapati R."/>
            <person name="Weinstock G."/>
            <person name="Gibbs R.A."/>
        </authorList>
    </citation>
    <scope>NUCLEOTIDE SEQUENCE [LARGE SCALE GENOMIC DNA]</scope>
</reference>
<reference key="2">
    <citation type="journal article" date="2003" name="Nat. Rev. Genet.">
        <title>Human and mouse proteases: a comparative genomic approach.</title>
        <authorList>
            <person name="Puente X.S."/>
            <person name="Sanchez L.M."/>
            <person name="Overall C.M."/>
            <person name="Lopez-Otin C."/>
        </authorList>
    </citation>
    <scope>IDENTIFICATION</scope>
</reference>
<name>OVCH1_HUMAN</name>